<comment type="function">
    <text evidence="2">Catalyzes the reversible aldol cleavage of N-acetylneuraminic acid (sialic acid; Neu5Ac) to form pyruvate and N-acetylmannosamine (ManNAc) via a Schiff base intermediate.</text>
</comment>
<comment type="catalytic activity">
    <reaction evidence="2">
        <text>aceneuramate = aldehydo-N-acetyl-D-mannosamine + pyruvate</text>
        <dbReference type="Rhea" id="RHEA:23296"/>
        <dbReference type="ChEBI" id="CHEBI:15361"/>
        <dbReference type="ChEBI" id="CHEBI:17122"/>
        <dbReference type="ChEBI" id="CHEBI:173083"/>
        <dbReference type="EC" id="4.1.3.3"/>
    </reaction>
</comment>
<comment type="pathway">
    <text evidence="2">Amino-sugar metabolism; N-acetylneuraminate degradation; D-fructose 6-phosphate from N-acetylneuraminate: step 1/5.</text>
</comment>
<comment type="subunit">
    <text evidence="2">Homotetramer.</text>
</comment>
<comment type="subcellular location">
    <subcellularLocation>
        <location evidence="2">Cytoplasm</location>
    </subcellularLocation>
</comment>
<comment type="similarity">
    <text evidence="2 3">Belongs to the DapA family. NanA subfamily.</text>
</comment>
<gene>
    <name evidence="2" type="primary">nanA</name>
    <name type="ordered locus">SF3261</name>
    <name type="ordered locus">S3478</name>
</gene>
<protein>
    <recommendedName>
        <fullName evidence="2">N-acetylneuraminate lyase</fullName>
        <shortName evidence="2">NAL</shortName>
        <shortName evidence="2">Neu5Ac lyase</shortName>
        <ecNumber evidence="2">4.1.3.3</ecNumber>
    </recommendedName>
    <alternativeName>
        <fullName evidence="2">N-acetylneuraminate pyruvate-lyase</fullName>
    </alternativeName>
    <alternativeName>
        <fullName evidence="2">N-acetylneuraminic acid aldolase</fullName>
    </alternativeName>
    <alternativeName>
        <fullName evidence="2">Sialate lyase</fullName>
    </alternativeName>
    <alternativeName>
        <fullName evidence="2">Sialic acid aldolase</fullName>
    </alternativeName>
    <alternativeName>
        <fullName evidence="2">Sialic acid lyase</fullName>
    </alternativeName>
</protein>
<organism>
    <name type="scientific">Shigella flexneri</name>
    <dbReference type="NCBI Taxonomy" id="623"/>
    <lineage>
        <taxon>Bacteria</taxon>
        <taxon>Pseudomonadati</taxon>
        <taxon>Pseudomonadota</taxon>
        <taxon>Gammaproteobacteria</taxon>
        <taxon>Enterobacterales</taxon>
        <taxon>Enterobacteriaceae</taxon>
        <taxon>Shigella</taxon>
    </lineage>
</organism>
<proteinExistence type="inferred from homology"/>
<sequence length="297" mass="32593">MATNLRGVMAALLTPFDQQQALDKASLRRLVQFNIQQGIDGLYVGGSTGEAFVQSLSEREQVLEIVAEEAKGKIKLIAHVGCVSTAESQQLAASAKRYGFDAVSAVTPFYYPFSFEEHCDHYRAIIDSADGLPMVVYNIPALSGVKLTLDQINTLVTLPGVGALKQTSGDLYQMEQIRREHPDLVLYNGYDEIFASGLLAGADGGIGSTYNIMGWRYQGIVKALKEGDIQTAQKLQTECNKVIDLLIKTGVFRGLKTVLHYMDVVSVPLCRKPFGPVDEKYLPELKALAQQLMQERG</sequence>
<keyword id="KW-0119">Carbohydrate metabolism</keyword>
<keyword id="KW-0963">Cytoplasm</keyword>
<keyword id="KW-0456">Lyase</keyword>
<keyword id="KW-1185">Reference proteome</keyword>
<keyword id="KW-0704">Schiff base</keyword>
<dbReference type="EC" id="4.1.3.3" evidence="2"/>
<dbReference type="EMBL" id="AE005674">
    <property type="protein sequence ID" value="AAN44725.1"/>
    <property type="molecule type" value="Genomic_DNA"/>
</dbReference>
<dbReference type="EMBL" id="AE014073">
    <property type="protein sequence ID" value="AAP18538.1"/>
    <property type="molecule type" value="Genomic_DNA"/>
</dbReference>
<dbReference type="RefSeq" id="NP_709018.1">
    <property type="nucleotide sequence ID" value="NC_004337.2"/>
</dbReference>
<dbReference type="RefSeq" id="WP_000224714.1">
    <property type="nucleotide sequence ID" value="NZ_WPGW01000176.1"/>
</dbReference>
<dbReference type="SMR" id="P0A6L6"/>
<dbReference type="STRING" id="198214.SF3261"/>
<dbReference type="DrugBank" id="DB02951">
    <property type="generic name" value="3-Hydroxypyruvic Acid"/>
</dbReference>
<dbReference type="PaxDb" id="198214-SF3261"/>
<dbReference type="GeneID" id="1027061"/>
<dbReference type="GeneID" id="93778761"/>
<dbReference type="KEGG" id="sfl:SF3261"/>
<dbReference type="KEGG" id="sfx:S3478"/>
<dbReference type="PATRIC" id="fig|198214.7.peg.3864"/>
<dbReference type="HOGENOM" id="CLU_049343_6_0_6"/>
<dbReference type="UniPathway" id="UPA00629">
    <property type="reaction ID" value="UER00680"/>
</dbReference>
<dbReference type="Proteomes" id="UP000001006">
    <property type="component" value="Chromosome"/>
</dbReference>
<dbReference type="Proteomes" id="UP000002673">
    <property type="component" value="Chromosome"/>
</dbReference>
<dbReference type="GO" id="GO:0005829">
    <property type="term" value="C:cytosol"/>
    <property type="evidence" value="ECO:0007669"/>
    <property type="project" value="TreeGrafter"/>
</dbReference>
<dbReference type="GO" id="GO:0008747">
    <property type="term" value="F:N-acetylneuraminate lyase activity"/>
    <property type="evidence" value="ECO:0007669"/>
    <property type="project" value="UniProtKB-UniRule"/>
</dbReference>
<dbReference type="GO" id="GO:0005975">
    <property type="term" value="P:carbohydrate metabolic process"/>
    <property type="evidence" value="ECO:0007669"/>
    <property type="project" value="UniProtKB-UniRule"/>
</dbReference>
<dbReference type="GO" id="GO:0019262">
    <property type="term" value="P:N-acetylneuraminate catabolic process"/>
    <property type="evidence" value="ECO:0007669"/>
    <property type="project" value="UniProtKB-UniRule"/>
</dbReference>
<dbReference type="CDD" id="cd00954">
    <property type="entry name" value="NAL"/>
    <property type="match status" value="1"/>
</dbReference>
<dbReference type="FunFam" id="3.20.20.70:FF:000039">
    <property type="entry name" value="N-acetylneuraminate lyase"/>
    <property type="match status" value="1"/>
</dbReference>
<dbReference type="Gene3D" id="3.20.20.70">
    <property type="entry name" value="Aldolase class I"/>
    <property type="match status" value="1"/>
</dbReference>
<dbReference type="HAMAP" id="MF_01237">
    <property type="entry name" value="N_acetylneuram_lyase"/>
    <property type="match status" value="1"/>
</dbReference>
<dbReference type="InterPro" id="IPR013785">
    <property type="entry name" value="Aldolase_TIM"/>
</dbReference>
<dbReference type="InterPro" id="IPR002220">
    <property type="entry name" value="DapA-like"/>
</dbReference>
<dbReference type="InterPro" id="IPR005264">
    <property type="entry name" value="NanA"/>
</dbReference>
<dbReference type="InterPro" id="IPR020625">
    <property type="entry name" value="Schiff_base-form_aldolases_AS"/>
</dbReference>
<dbReference type="InterPro" id="IPR020624">
    <property type="entry name" value="Schiff_base-form_aldolases_CS"/>
</dbReference>
<dbReference type="NCBIfam" id="TIGR00683">
    <property type="entry name" value="nanA"/>
    <property type="match status" value="1"/>
</dbReference>
<dbReference type="NCBIfam" id="NF003164">
    <property type="entry name" value="PRK04147.1"/>
    <property type="match status" value="1"/>
</dbReference>
<dbReference type="PANTHER" id="PTHR42849">
    <property type="entry name" value="N-ACETYLNEURAMINATE LYASE"/>
    <property type="match status" value="1"/>
</dbReference>
<dbReference type="PANTHER" id="PTHR42849:SF1">
    <property type="entry name" value="N-ACETYLNEURAMINATE LYASE"/>
    <property type="match status" value="1"/>
</dbReference>
<dbReference type="Pfam" id="PF00701">
    <property type="entry name" value="DHDPS"/>
    <property type="match status" value="1"/>
</dbReference>
<dbReference type="PIRSF" id="PIRSF001365">
    <property type="entry name" value="DHDPS"/>
    <property type="match status" value="1"/>
</dbReference>
<dbReference type="PRINTS" id="PR00146">
    <property type="entry name" value="DHPICSNTHASE"/>
</dbReference>
<dbReference type="SMART" id="SM01130">
    <property type="entry name" value="DHDPS"/>
    <property type="match status" value="1"/>
</dbReference>
<dbReference type="SUPFAM" id="SSF51569">
    <property type="entry name" value="Aldolase"/>
    <property type="match status" value="1"/>
</dbReference>
<dbReference type="PROSITE" id="PS00665">
    <property type="entry name" value="DHDPS_1"/>
    <property type="match status" value="1"/>
</dbReference>
<dbReference type="PROSITE" id="PS00666">
    <property type="entry name" value="DHDPS_2"/>
    <property type="match status" value="1"/>
</dbReference>
<evidence type="ECO:0000250" key="1"/>
<evidence type="ECO:0000255" key="2">
    <source>
        <dbReference type="HAMAP-Rule" id="MF_01237"/>
    </source>
</evidence>
<evidence type="ECO:0000305" key="3"/>
<reference key="1">
    <citation type="journal article" date="2002" name="Nucleic Acids Res.">
        <title>Genome sequence of Shigella flexneri 2a: insights into pathogenicity through comparison with genomes of Escherichia coli K12 and O157.</title>
        <authorList>
            <person name="Jin Q."/>
            <person name="Yuan Z."/>
            <person name="Xu J."/>
            <person name="Wang Y."/>
            <person name="Shen Y."/>
            <person name="Lu W."/>
            <person name="Wang J."/>
            <person name="Liu H."/>
            <person name="Yang J."/>
            <person name="Yang F."/>
            <person name="Zhang X."/>
            <person name="Zhang J."/>
            <person name="Yang G."/>
            <person name="Wu H."/>
            <person name="Qu D."/>
            <person name="Dong J."/>
            <person name="Sun L."/>
            <person name="Xue Y."/>
            <person name="Zhao A."/>
            <person name="Gao Y."/>
            <person name="Zhu J."/>
            <person name="Kan B."/>
            <person name="Ding K."/>
            <person name="Chen S."/>
            <person name="Cheng H."/>
            <person name="Yao Z."/>
            <person name="He B."/>
            <person name="Chen R."/>
            <person name="Ma D."/>
            <person name="Qiang B."/>
            <person name="Wen Y."/>
            <person name="Hou Y."/>
            <person name="Yu J."/>
        </authorList>
    </citation>
    <scope>NUCLEOTIDE SEQUENCE [LARGE SCALE GENOMIC DNA]</scope>
    <source>
        <strain>301 / Serotype 2a</strain>
    </source>
</reference>
<reference key="2">
    <citation type="journal article" date="2003" name="Infect. Immun.">
        <title>Complete genome sequence and comparative genomics of Shigella flexneri serotype 2a strain 2457T.</title>
        <authorList>
            <person name="Wei J."/>
            <person name="Goldberg M.B."/>
            <person name="Burland V."/>
            <person name="Venkatesan M.M."/>
            <person name="Deng W."/>
            <person name="Fournier G."/>
            <person name="Mayhew G.F."/>
            <person name="Plunkett G. III"/>
            <person name="Rose D.J."/>
            <person name="Darling A."/>
            <person name="Mau B."/>
            <person name="Perna N.T."/>
            <person name="Payne S.M."/>
            <person name="Runyen-Janecky L.J."/>
            <person name="Zhou S."/>
            <person name="Schwartz D.C."/>
            <person name="Blattner F.R."/>
        </authorList>
    </citation>
    <scope>NUCLEOTIDE SEQUENCE [LARGE SCALE GENOMIC DNA]</scope>
    <source>
        <strain>ATCC 700930 / 2457T / Serotype 2a</strain>
    </source>
</reference>
<accession>P0A6L6</accession>
<accession>P06995</accession>
<feature type="initiator methionine" description="Removed" evidence="1">
    <location>
        <position position="1"/>
    </location>
</feature>
<feature type="chain" id="PRO_0000103220" description="N-acetylneuraminate lyase">
    <location>
        <begin position="2"/>
        <end position="297"/>
    </location>
</feature>
<feature type="active site" description="Proton donor" evidence="2">
    <location>
        <position position="137"/>
    </location>
</feature>
<feature type="active site" description="Schiff-base intermediate with substrate" evidence="2">
    <location>
        <position position="165"/>
    </location>
</feature>
<feature type="binding site" evidence="2">
    <location>
        <position position="47"/>
    </location>
    <ligand>
        <name>aceneuramate</name>
        <dbReference type="ChEBI" id="CHEBI:173083"/>
    </ligand>
</feature>
<feature type="binding site" evidence="2">
    <location>
        <position position="48"/>
    </location>
    <ligand>
        <name>aceneuramate</name>
        <dbReference type="ChEBI" id="CHEBI:173083"/>
    </ligand>
</feature>
<feature type="binding site" evidence="2">
    <location>
        <position position="167"/>
    </location>
    <ligand>
        <name>aceneuramate</name>
        <dbReference type="ChEBI" id="CHEBI:173083"/>
    </ligand>
</feature>
<feature type="binding site" evidence="2">
    <location>
        <position position="189"/>
    </location>
    <ligand>
        <name>aceneuramate</name>
        <dbReference type="ChEBI" id="CHEBI:173083"/>
    </ligand>
</feature>
<feature type="binding site" evidence="2">
    <location>
        <position position="191"/>
    </location>
    <ligand>
        <name>aceneuramate</name>
        <dbReference type="ChEBI" id="CHEBI:173083"/>
    </ligand>
</feature>
<feature type="binding site" evidence="2">
    <location>
        <position position="192"/>
    </location>
    <ligand>
        <name>aceneuramate</name>
        <dbReference type="ChEBI" id="CHEBI:173083"/>
    </ligand>
</feature>
<feature type="binding site" evidence="2">
    <location>
        <position position="208"/>
    </location>
    <ligand>
        <name>aceneuramate</name>
        <dbReference type="ChEBI" id="CHEBI:173083"/>
    </ligand>
</feature>
<name>NANA_SHIFL</name>